<dbReference type="EMBL" id="AE014075">
    <property type="protein sequence ID" value="AAN83056.1"/>
    <property type="molecule type" value="Genomic_DNA"/>
</dbReference>
<dbReference type="RefSeq" id="WP_000673464.1">
    <property type="nucleotide sequence ID" value="NZ_CP051263.1"/>
</dbReference>
<dbReference type="SMR" id="P0A989"/>
<dbReference type="STRING" id="199310.c4623"/>
<dbReference type="GeneID" id="93778442"/>
<dbReference type="KEGG" id="ecc:c4623"/>
<dbReference type="eggNOG" id="COG0592">
    <property type="taxonomic scope" value="Bacteria"/>
</dbReference>
<dbReference type="HOGENOM" id="CLU_038149_4_2_6"/>
<dbReference type="BioCyc" id="ECOL199310:C4623-MONOMER"/>
<dbReference type="Proteomes" id="UP000001410">
    <property type="component" value="Chromosome"/>
</dbReference>
<dbReference type="GO" id="GO:0005737">
    <property type="term" value="C:cytoplasm"/>
    <property type="evidence" value="ECO:0007669"/>
    <property type="project" value="UniProtKB-SubCell"/>
</dbReference>
<dbReference type="GO" id="GO:0009360">
    <property type="term" value="C:DNA polymerase III complex"/>
    <property type="evidence" value="ECO:0007669"/>
    <property type="project" value="InterPro"/>
</dbReference>
<dbReference type="GO" id="GO:0008408">
    <property type="term" value="F:3'-5' exonuclease activity"/>
    <property type="evidence" value="ECO:0007669"/>
    <property type="project" value="InterPro"/>
</dbReference>
<dbReference type="GO" id="GO:0003677">
    <property type="term" value="F:DNA binding"/>
    <property type="evidence" value="ECO:0007669"/>
    <property type="project" value="UniProtKB-KW"/>
</dbReference>
<dbReference type="GO" id="GO:0003887">
    <property type="term" value="F:DNA-directed DNA polymerase activity"/>
    <property type="evidence" value="ECO:0007669"/>
    <property type="project" value="UniProtKB-KW"/>
</dbReference>
<dbReference type="GO" id="GO:0006271">
    <property type="term" value="P:DNA strand elongation involved in DNA replication"/>
    <property type="evidence" value="ECO:0007669"/>
    <property type="project" value="TreeGrafter"/>
</dbReference>
<dbReference type="CDD" id="cd00140">
    <property type="entry name" value="beta_clamp"/>
    <property type="match status" value="1"/>
</dbReference>
<dbReference type="FunFam" id="3.10.150.10:FF:000001">
    <property type="entry name" value="Beta sliding clamp"/>
    <property type="match status" value="1"/>
</dbReference>
<dbReference type="FunFam" id="3.10.150.10:FF:000002">
    <property type="entry name" value="Beta sliding clamp"/>
    <property type="match status" value="1"/>
</dbReference>
<dbReference type="FunFam" id="3.10.150.10:FF:000003">
    <property type="entry name" value="Beta sliding clamp"/>
    <property type="match status" value="1"/>
</dbReference>
<dbReference type="Gene3D" id="3.10.150.10">
    <property type="entry name" value="DNA Polymerase III, subunit A, domain 2"/>
    <property type="match status" value="3"/>
</dbReference>
<dbReference type="InterPro" id="IPR046938">
    <property type="entry name" value="DNA_clamp_sf"/>
</dbReference>
<dbReference type="InterPro" id="IPR001001">
    <property type="entry name" value="DNA_polIII_beta"/>
</dbReference>
<dbReference type="InterPro" id="IPR022635">
    <property type="entry name" value="DNA_polIII_beta_C"/>
</dbReference>
<dbReference type="InterPro" id="IPR022637">
    <property type="entry name" value="DNA_polIII_beta_cen"/>
</dbReference>
<dbReference type="InterPro" id="IPR022634">
    <property type="entry name" value="DNA_polIII_beta_N"/>
</dbReference>
<dbReference type="NCBIfam" id="TIGR00663">
    <property type="entry name" value="dnan"/>
    <property type="match status" value="1"/>
</dbReference>
<dbReference type="PANTHER" id="PTHR30478:SF0">
    <property type="entry name" value="BETA SLIDING CLAMP"/>
    <property type="match status" value="1"/>
</dbReference>
<dbReference type="PANTHER" id="PTHR30478">
    <property type="entry name" value="DNA POLYMERASE III SUBUNIT BETA"/>
    <property type="match status" value="1"/>
</dbReference>
<dbReference type="Pfam" id="PF00712">
    <property type="entry name" value="DNA_pol3_beta"/>
    <property type="match status" value="1"/>
</dbReference>
<dbReference type="Pfam" id="PF02767">
    <property type="entry name" value="DNA_pol3_beta_2"/>
    <property type="match status" value="1"/>
</dbReference>
<dbReference type="Pfam" id="PF02768">
    <property type="entry name" value="DNA_pol3_beta_3"/>
    <property type="match status" value="1"/>
</dbReference>
<dbReference type="PIRSF" id="PIRSF000804">
    <property type="entry name" value="DNA_pol_III_b"/>
    <property type="match status" value="1"/>
</dbReference>
<dbReference type="SMART" id="SM00480">
    <property type="entry name" value="POL3Bc"/>
    <property type="match status" value="1"/>
</dbReference>
<dbReference type="SUPFAM" id="SSF55979">
    <property type="entry name" value="DNA clamp"/>
    <property type="match status" value="3"/>
</dbReference>
<feature type="chain" id="PRO_0000105436" description="Beta sliding clamp">
    <location>
        <begin position="1"/>
        <end position="366"/>
    </location>
</feature>
<feature type="region of interest" description="I" evidence="1">
    <location>
        <begin position="1"/>
        <end position="125"/>
    </location>
</feature>
<feature type="region of interest" description="II" evidence="1">
    <location>
        <begin position="126"/>
        <end position="253"/>
    </location>
</feature>
<feature type="region of interest" description="III" evidence="1">
    <location>
        <begin position="254"/>
        <end position="366"/>
    </location>
</feature>
<sequence>MKFTVEREHLLKPLQQVSGPLGGRPTLPILGNLLLQVADGTLSLTGTDLEMEMVARVALVQPHEPGATTVPARKFFDICRGLPEGAEIAVQLEGERMLVRSGRSRFSLSTLPAADFPNLDDWQSEVEFTLPQATMKRLIEATQFSMAHQDVRYYLNGMLFETEGEELRTVATDGHRLAVCSMPIGQSLPSHSVIVPRKGVIELMRMLDGGDNPLRVQIGSNNIRAHVGDFIFTSKLVDGRFPDYRRVLPKNPDKHLEAGCDLLKQAFARAAILSNEKFRGVRLYVSENQLKITANNPEQEEAEEILDVTYSGAEMEIGFNVSYVLDVLNALKCENVRMMLTDSVSSVQIEDAASQSAAYVVMPMRL</sequence>
<comment type="function">
    <text evidence="2">Confers DNA tethering and processivity to DNA polymerases and other proteins. Acts as a clamp, forming a ring around DNA (a reaction catalyzed by the clamp-loading complex) which diffuses in an ATP-independent manner freely and bidirectionally along dsDNA. Initially characterized for its ability to contact the catalytic subunit of DNA polymerase III (Pol III), a complex, multichain enzyme responsible for most of the replicative synthesis in bacteria; Pol III exhibits 3'-5' exonuclease proofreading activity. The beta chain is required for initiation of replication as well as for processivity of DNA replication.</text>
</comment>
<comment type="subunit">
    <text evidence="2">Forms a ring-shaped head-to-tail homodimer around DNA which binds and tethers DNA polymerases and other proteins to the DNA. The DNA replisome complex has a single clamp-loading complex (3 tau and 1 each of delta, delta', psi and chi subunits) which binds 3 Pol III cores (1 core on the leading strand and 2 on the lagging strand) each with a beta sliding clamp dimer. Additional proteins in the replisome are other copies of gamma, psi and chi, Ssb, DNA helicase and RNA primase.</text>
</comment>
<comment type="subcellular location">
    <subcellularLocation>
        <location evidence="2">Cytoplasm</location>
    </subcellularLocation>
</comment>
<comment type="similarity">
    <text evidence="3">Belongs to the beta sliding clamp family.</text>
</comment>
<name>DPO3B_ECOL6</name>
<accession>P0A989</accession>
<accession>P00583</accession>
<organism>
    <name type="scientific">Escherichia coli O6:H1 (strain CFT073 / ATCC 700928 / UPEC)</name>
    <dbReference type="NCBI Taxonomy" id="199310"/>
    <lineage>
        <taxon>Bacteria</taxon>
        <taxon>Pseudomonadati</taxon>
        <taxon>Pseudomonadota</taxon>
        <taxon>Gammaproteobacteria</taxon>
        <taxon>Enterobacterales</taxon>
        <taxon>Enterobacteriaceae</taxon>
        <taxon>Escherichia</taxon>
    </lineage>
</organism>
<reference key="1">
    <citation type="journal article" date="2002" name="Proc. Natl. Acad. Sci. U.S.A.">
        <title>Extensive mosaic structure revealed by the complete genome sequence of uropathogenic Escherichia coli.</title>
        <authorList>
            <person name="Welch R.A."/>
            <person name="Burland V."/>
            <person name="Plunkett G. III"/>
            <person name="Redford P."/>
            <person name="Roesch P."/>
            <person name="Rasko D."/>
            <person name="Buckles E.L."/>
            <person name="Liou S.-R."/>
            <person name="Boutin A."/>
            <person name="Hackett J."/>
            <person name="Stroud D."/>
            <person name="Mayhew G.F."/>
            <person name="Rose D.J."/>
            <person name="Zhou S."/>
            <person name="Schwartz D.C."/>
            <person name="Perna N.T."/>
            <person name="Mobley H.L.T."/>
            <person name="Donnenberg M.S."/>
            <person name="Blattner F.R."/>
        </authorList>
    </citation>
    <scope>NUCLEOTIDE SEQUENCE [LARGE SCALE GENOMIC DNA]</scope>
    <source>
        <strain>CFT073 / ATCC 700928 / UPEC</strain>
    </source>
</reference>
<keyword id="KW-0963">Cytoplasm</keyword>
<keyword id="KW-0235">DNA replication</keyword>
<keyword id="KW-0238">DNA-binding</keyword>
<keyword id="KW-0239">DNA-directed DNA polymerase</keyword>
<keyword id="KW-0548">Nucleotidyltransferase</keyword>
<keyword id="KW-1185">Reference proteome</keyword>
<keyword id="KW-0808">Transferase</keyword>
<gene>
    <name type="primary">dnaN</name>
    <name type="ordered locus">c4623</name>
</gene>
<evidence type="ECO:0000250" key="1"/>
<evidence type="ECO:0000250" key="2">
    <source>
        <dbReference type="UniProtKB" id="P0A988"/>
    </source>
</evidence>
<evidence type="ECO:0000305" key="3"/>
<proteinExistence type="inferred from homology"/>
<protein>
    <recommendedName>
        <fullName>Beta sliding clamp</fullName>
        <shortName>Beta clamp</shortName>
        <shortName>Sliding clamp</shortName>
    </recommendedName>
    <alternativeName>
        <fullName>Beta-clamp processivity factor</fullName>
    </alternativeName>
    <alternativeName>
        <fullName>DNA polymerase III beta sliding clamp subunit</fullName>
    </alternativeName>
    <alternativeName>
        <fullName>DNA polymerase III subunit beta</fullName>
    </alternativeName>
</protein>